<accession>A9N3N1</accession>
<name>GCSP_SALPB</name>
<reference key="1">
    <citation type="submission" date="2007-11" db="EMBL/GenBank/DDBJ databases">
        <authorList>
            <consortium name="The Salmonella enterica serovar Paratyphi B Genome Sequencing Project"/>
            <person name="McClelland M."/>
            <person name="Sanderson E.K."/>
            <person name="Porwollik S."/>
            <person name="Spieth J."/>
            <person name="Clifton W.S."/>
            <person name="Fulton R."/>
            <person name="Cordes M."/>
            <person name="Wollam A."/>
            <person name="Shah N."/>
            <person name="Pepin K."/>
            <person name="Bhonagiri V."/>
            <person name="Nash W."/>
            <person name="Johnson M."/>
            <person name="Thiruvilangam P."/>
            <person name="Wilson R."/>
        </authorList>
    </citation>
    <scope>NUCLEOTIDE SEQUENCE [LARGE SCALE GENOMIC DNA]</scope>
    <source>
        <strain>ATCC BAA-1250 / SPB7</strain>
    </source>
</reference>
<gene>
    <name evidence="1" type="primary">gcvP</name>
    <name type="ordered locus">SPAB_03802</name>
</gene>
<organism>
    <name type="scientific">Salmonella paratyphi B (strain ATCC BAA-1250 / SPB7)</name>
    <dbReference type="NCBI Taxonomy" id="1016998"/>
    <lineage>
        <taxon>Bacteria</taxon>
        <taxon>Pseudomonadati</taxon>
        <taxon>Pseudomonadota</taxon>
        <taxon>Gammaproteobacteria</taxon>
        <taxon>Enterobacterales</taxon>
        <taxon>Enterobacteriaceae</taxon>
        <taxon>Salmonella</taxon>
    </lineage>
</organism>
<feature type="chain" id="PRO_1000083212" description="Glycine dehydrogenase (decarboxylating)">
    <location>
        <begin position="1"/>
        <end position="957"/>
    </location>
</feature>
<feature type="modified residue" description="N6-(pyridoxal phosphate)lysine" evidence="1">
    <location>
        <position position="708"/>
    </location>
</feature>
<proteinExistence type="inferred from homology"/>
<sequence>MTQTLSQLENRGAFIERHIGPDAAQQQEMLNAVGAESLNALTGQIVPKDIQLATPPQVGEAATEYAALAELKAIAGRNKRFTSYIGMGYTAVQLPPVILRNMLENPGWYTAYTPYQPEVSQGRLEALLNFQQITLDLTGLDMASASLLDEATAAAEAMAMAKRVSKLKNANRFFVASDVHPQTLDVVRTRAETFGFDVIVDDAAKALDHQDVFGVLLQQVGTTGEIHDYGALISELKARKVIVSVAADFMALVLLTAPGKQGADIVFGSAQRFGVPMGYGGPHAAFFAAKDEFKRSMPGRIIGVSKDAAGNTALRMAMQTREQHIRREKANSNICTSQVLLANIASLYAVYHGPVGLKRIANRIHRLTDILAAGLQQKGLKLRHAHYFDTLCVEVADKAAVLARAEAAEINLRSDIHNAVGITLDETTTRENVAQLFNVLLGDSHGLNIETLDKDVALDSRSIQQSMLRDDAILTHPVFNRYHSETEMMRYMHSLERKDLALNQAMIPLGSCTMKLNAAAEMIPITWPEFAELHPFCPPEQAEGYHQMISQLSDWLVKLTGYDAVCMQPNSGAQGEYAGLLAIRHYHESRNEGHRDICLIPASAHGTNPASAHMAGMQVVVVACDKNGNIDLDDLRAKAEQHAANLSCIMVTYPSTHGVYEETIREVCEVVHQFGGQVYLDGANMNAQVGITSPGFIGADVSHLNLHKTFCIPHGGGGPGMGPIGVKAHLAPFVPGHSVVQIEGMLTRQGAVSAAPFGSASILPISWMYIRMMGAEGLKQASQVAILNANYIASRLKDAYPVLYTGRDGRVAHECILDIRPLKEETGISELDIAKRLIDYGFHAPTMSFPVAGTLMVEPTESEGKAELDRFIDAMLAIRAEIDQVKAGVWPLEDNPLVNAPHIQSELVAEWAHPYSREVAVFPAGVADKYWPTVKRLDDVYGDRNLFCSCVPISDYQ</sequence>
<protein>
    <recommendedName>
        <fullName evidence="1">Glycine dehydrogenase (decarboxylating)</fullName>
        <ecNumber evidence="1">1.4.4.2</ecNumber>
    </recommendedName>
    <alternativeName>
        <fullName evidence="1">Glycine cleavage system P-protein</fullName>
    </alternativeName>
    <alternativeName>
        <fullName evidence="1">Glycine decarboxylase</fullName>
    </alternativeName>
    <alternativeName>
        <fullName evidence="1">Glycine dehydrogenase (aminomethyl-transferring)</fullName>
    </alternativeName>
</protein>
<comment type="function">
    <text evidence="1">The glycine cleavage system catalyzes the degradation of glycine. The P protein binds the alpha-amino group of glycine through its pyridoxal phosphate cofactor; CO(2) is released and the remaining methylamine moiety is then transferred to the lipoamide cofactor of the H protein.</text>
</comment>
<comment type="catalytic activity">
    <reaction evidence="1">
        <text>N(6)-[(R)-lipoyl]-L-lysyl-[glycine-cleavage complex H protein] + glycine + H(+) = N(6)-[(R)-S(8)-aminomethyldihydrolipoyl]-L-lysyl-[glycine-cleavage complex H protein] + CO2</text>
        <dbReference type="Rhea" id="RHEA:24304"/>
        <dbReference type="Rhea" id="RHEA-COMP:10494"/>
        <dbReference type="Rhea" id="RHEA-COMP:10495"/>
        <dbReference type="ChEBI" id="CHEBI:15378"/>
        <dbReference type="ChEBI" id="CHEBI:16526"/>
        <dbReference type="ChEBI" id="CHEBI:57305"/>
        <dbReference type="ChEBI" id="CHEBI:83099"/>
        <dbReference type="ChEBI" id="CHEBI:83143"/>
        <dbReference type="EC" id="1.4.4.2"/>
    </reaction>
</comment>
<comment type="cofactor">
    <cofactor evidence="1">
        <name>pyridoxal 5'-phosphate</name>
        <dbReference type="ChEBI" id="CHEBI:597326"/>
    </cofactor>
</comment>
<comment type="subunit">
    <text evidence="1">The glycine cleavage system is composed of four proteins: P, T, L and H.</text>
</comment>
<comment type="similarity">
    <text evidence="1">Belongs to the GcvP family.</text>
</comment>
<keyword id="KW-0560">Oxidoreductase</keyword>
<keyword id="KW-0663">Pyridoxal phosphate</keyword>
<evidence type="ECO:0000255" key="1">
    <source>
        <dbReference type="HAMAP-Rule" id="MF_00711"/>
    </source>
</evidence>
<dbReference type="EC" id="1.4.4.2" evidence="1"/>
<dbReference type="EMBL" id="CP000886">
    <property type="protein sequence ID" value="ABX69134.1"/>
    <property type="molecule type" value="Genomic_DNA"/>
</dbReference>
<dbReference type="RefSeq" id="WP_000194959.1">
    <property type="nucleotide sequence ID" value="NC_010102.1"/>
</dbReference>
<dbReference type="SMR" id="A9N3N1"/>
<dbReference type="KEGG" id="spq:SPAB_03802"/>
<dbReference type="PATRIC" id="fig|1016998.12.peg.3583"/>
<dbReference type="HOGENOM" id="CLU_004620_3_2_6"/>
<dbReference type="BioCyc" id="SENT1016998:SPAB_RS15475-MONOMER"/>
<dbReference type="Proteomes" id="UP000008556">
    <property type="component" value="Chromosome"/>
</dbReference>
<dbReference type="GO" id="GO:0005829">
    <property type="term" value="C:cytosol"/>
    <property type="evidence" value="ECO:0007669"/>
    <property type="project" value="TreeGrafter"/>
</dbReference>
<dbReference type="GO" id="GO:0005960">
    <property type="term" value="C:glycine cleavage complex"/>
    <property type="evidence" value="ECO:0007669"/>
    <property type="project" value="TreeGrafter"/>
</dbReference>
<dbReference type="GO" id="GO:0016594">
    <property type="term" value="F:glycine binding"/>
    <property type="evidence" value="ECO:0007669"/>
    <property type="project" value="TreeGrafter"/>
</dbReference>
<dbReference type="GO" id="GO:0004375">
    <property type="term" value="F:glycine dehydrogenase (decarboxylating) activity"/>
    <property type="evidence" value="ECO:0007669"/>
    <property type="project" value="UniProtKB-EC"/>
</dbReference>
<dbReference type="GO" id="GO:0030170">
    <property type="term" value="F:pyridoxal phosphate binding"/>
    <property type="evidence" value="ECO:0007669"/>
    <property type="project" value="TreeGrafter"/>
</dbReference>
<dbReference type="GO" id="GO:0019464">
    <property type="term" value="P:glycine decarboxylation via glycine cleavage system"/>
    <property type="evidence" value="ECO:0007669"/>
    <property type="project" value="UniProtKB-UniRule"/>
</dbReference>
<dbReference type="CDD" id="cd00613">
    <property type="entry name" value="GDC-P"/>
    <property type="match status" value="2"/>
</dbReference>
<dbReference type="FunFam" id="3.40.640.10:FF:000005">
    <property type="entry name" value="Glycine dehydrogenase (decarboxylating), mitochondrial"/>
    <property type="match status" value="1"/>
</dbReference>
<dbReference type="FunFam" id="3.90.1150.10:FF:000007">
    <property type="entry name" value="Glycine dehydrogenase (decarboxylating), mitochondrial"/>
    <property type="match status" value="1"/>
</dbReference>
<dbReference type="FunFam" id="3.40.640.10:FF:000007">
    <property type="entry name" value="glycine dehydrogenase (Decarboxylating), mitochondrial"/>
    <property type="match status" value="1"/>
</dbReference>
<dbReference type="Gene3D" id="3.90.1150.10">
    <property type="entry name" value="Aspartate Aminotransferase, domain 1"/>
    <property type="match status" value="2"/>
</dbReference>
<dbReference type="Gene3D" id="3.40.640.10">
    <property type="entry name" value="Type I PLP-dependent aspartate aminotransferase-like (Major domain)"/>
    <property type="match status" value="2"/>
</dbReference>
<dbReference type="HAMAP" id="MF_00711">
    <property type="entry name" value="GcvP"/>
    <property type="match status" value="1"/>
</dbReference>
<dbReference type="InterPro" id="IPR003437">
    <property type="entry name" value="GcvP"/>
</dbReference>
<dbReference type="InterPro" id="IPR049316">
    <property type="entry name" value="GDC-P_C"/>
</dbReference>
<dbReference type="InterPro" id="IPR049315">
    <property type="entry name" value="GDC-P_N"/>
</dbReference>
<dbReference type="InterPro" id="IPR020581">
    <property type="entry name" value="GDC_P"/>
</dbReference>
<dbReference type="InterPro" id="IPR015424">
    <property type="entry name" value="PyrdxlP-dep_Trfase"/>
</dbReference>
<dbReference type="InterPro" id="IPR015421">
    <property type="entry name" value="PyrdxlP-dep_Trfase_major"/>
</dbReference>
<dbReference type="InterPro" id="IPR015422">
    <property type="entry name" value="PyrdxlP-dep_Trfase_small"/>
</dbReference>
<dbReference type="NCBIfam" id="TIGR00461">
    <property type="entry name" value="gcvP"/>
    <property type="match status" value="1"/>
</dbReference>
<dbReference type="NCBIfam" id="NF003346">
    <property type="entry name" value="PRK04366.1"/>
    <property type="match status" value="1"/>
</dbReference>
<dbReference type="PANTHER" id="PTHR11773:SF13">
    <property type="entry name" value="GLYCINE DEHYDROGENASE (DECARBOXYLATING)"/>
    <property type="match status" value="1"/>
</dbReference>
<dbReference type="PANTHER" id="PTHR11773">
    <property type="entry name" value="GLYCINE DEHYDROGENASE, DECARBOXYLATING"/>
    <property type="match status" value="1"/>
</dbReference>
<dbReference type="Pfam" id="PF21478">
    <property type="entry name" value="GcvP2_C"/>
    <property type="match status" value="1"/>
</dbReference>
<dbReference type="Pfam" id="PF02347">
    <property type="entry name" value="GDC-P"/>
    <property type="match status" value="2"/>
</dbReference>
<dbReference type="SUPFAM" id="SSF53383">
    <property type="entry name" value="PLP-dependent transferases"/>
    <property type="match status" value="2"/>
</dbReference>